<proteinExistence type="inferred from homology"/>
<name>SYC_STRCO</name>
<protein>
    <recommendedName>
        <fullName evidence="1">Cysteine--tRNA ligase</fullName>
        <ecNumber evidence="1">6.1.1.16</ecNumber>
    </recommendedName>
    <alternativeName>
        <fullName evidence="1">Cysteinyl-tRNA synthetase</fullName>
        <shortName evidence="1">CysRS</shortName>
    </alternativeName>
</protein>
<gene>
    <name evidence="1" type="primary">cysS</name>
    <name type="synonym">cysS1</name>
    <name type="ordered locus">SCO4235</name>
    <name type="ORF">SCD8A.08</name>
</gene>
<accession>Q9L0Q6</accession>
<feature type="chain" id="PRO_0000159490" description="Cysteine--tRNA ligase">
    <location>
        <begin position="1"/>
        <end position="613"/>
    </location>
</feature>
<feature type="repeat" description="1">
    <location>
        <begin position="36"/>
        <end position="49"/>
    </location>
</feature>
<feature type="repeat" description="2">
    <location>
        <begin position="50"/>
        <end position="63"/>
    </location>
</feature>
<feature type="repeat" description="3">
    <location>
        <begin position="64"/>
        <end position="77"/>
    </location>
</feature>
<feature type="repeat" description="4">
    <location>
        <begin position="78"/>
        <end position="91"/>
    </location>
</feature>
<feature type="repeat" description="5">
    <location>
        <begin position="92"/>
        <end position="105"/>
    </location>
</feature>
<feature type="repeat" description="6">
    <location>
        <begin position="106"/>
        <end position="119"/>
    </location>
</feature>
<feature type="region of interest" description="Disordered" evidence="2">
    <location>
        <begin position="1"/>
        <end position="130"/>
    </location>
</feature>
<feature type="region of interest" description="6 X 14 AA tandem repeats of P-[TA]-R-G-D-K-K-R-A-[RP]-R-[PL]-G-V">
    <location>
        <begin position="36"/>
        <end position="119"/>
    </location>
</feature>
<feature type="region of interest" description="Cysteinyl-tRNA synthetase">
    <location>
        <begin position="148"/>
        <end position="613"/>
    </location>
</feature>
<feature type="short sequence motif" description="'HIGH' region">
    <location>
        <begin position="178"/>
        <end position="188"/>
    </location>
</feature>
<feature type="short sequence motif" description="'KMSKS' region">
    <location>
        <begin position="411"/>
        <end position="415"/>
    </location>
</feature>
<feature type="binding site" evidence="1">
    <location>
        <position position="176"/>
    </location>
    <ligand>
        <name>Zn(2+)</name>
        <dbReference type="ChEBI" id="CHEBI:29105"/>
    </ligand>
</feature>
<feature type="binding site" evidence="1">
    <location>
        <position position="355"/>
    </location>
    <ligand>
        <name>Zn(2+)</name>
        <dbReference type="ChEBI" id="CHEBI:29105"/>
    </ligand>
</feature>
<feature type="binding site" evidence="1">
    <location>
        <position position="380"/>
    </location>
    <ligand>
        <name>Zn(2+)</name>
        <dbReference type="ChEBI" id="CHEBI:29105"/>
    </ligand>
</feature>
<feature type="binding site" evidence="1">
    <location>
        <position position="384"/>
    </location>
    <ligand>
        <name>Zn(2+)</name>
        <dbReference type="ChEBI" id="CHEBI:29105"/>
    </ligand>
</feature>
<feature type="binding site" evidence="1">
    <location>
        <position position="414"/>
    </location>
    <ligand>
        <name>ATP</name>
        <dbReference type="ChEBI" id="CHEBI:30616"/>
    </ligand>
</feature>
<keyword id="KW-0030">Aminoacyl-tRNA synthetase</keyword>
<keyword id="KW-0067">ATP-binding</keyword>
<keyword id="KW-0963">Cytoplasm</keyword>
<keyword id="KW-0436">Ligase</keyword>
<keyword id="KW-0479">Metal-binding</keyword>
<keyword id="KW-0547">Nucleotide-binding</keyword>
<keyword id="KW-0648">Protein biosynthesis</keyword>
<keyword id="KW-1185">Reference proteome</keyword>
<keyword id="KW-0677">Repeat</keyword>
<keyword id="KW-0862">Zinc</keyword>
<organism>
    <name type="scientific">Streptomyces coelicolor (strain ATCC BAA-471 / A3(2) / M145)</name>
    <dbReference type="NCBI Taxonomy" id="100226"/>
    <lineage>
        <taxon>Bacteria</taxon>
        <taxon>Bacillati</taxon>
        <taxon>Actinomycetota</taxon>
        <taxon>Actinomycetes</taxon>
        <taxon>Kitasatosporales</taxon>
        <taxon>Streptomycetaceae</taxon>
        <taxon>Streptomyces</taxon>
        <taxon>Streptomyces albidoflavus group</taxon>
    </lineage>
</organism>
<sequence length="613" mass="67539">MSAGAGTPRRPAVRGSAPHPARGSAPGPRPMPTHHPTRGDKKRARRPGVPTRGDKKRAPRLGVPARGDKKRARRPGVPAREDKKRAPRPGVPTRGDKKRAPRLGVPARGDKKRARRPGVPTRGGVARSGNDGPRVPLALLGAYYPGHVTIRLYDTSARQIRDFAPLTPGCVSIYLCGATVQAAPHIGHIRSGLNFDIMRRWFAYRGYDVTFVRNVTDIDDKIIRKAAEQNRPWWSIGYENERAFNDAYAALGCLPPTYEPRATGHITEMVEMMRGLIERGHAYEADGNVYFDVRSLPGYLSLSNQDLDELRQPSEDGETGKRDLRDFAMWKAAKPGEPSWETPWGRGRPGWHLECSAMAHKYLGEEFDIHGGGIDLIFPHHENEIAQAKGFGDAFARYWVHNAWVTMSGEKMSKSLGNSVLVSEMVKKWPPVVLRYYLGTPHYRSTIEYSEESLREAESAYGRIEGFVQRVTELAGHAVEPAAEVPPAFAEAMDDDLGVPQALAIVHTTVRQGNSALAADDKDAAVARLAEVRAMLGVLGLDPLDAQWAGAQAQGEDLRHVVDSLVRLVLDQREGARARKDWATADAIRDQLGQSGLVIEDSPQGPRWSLGSR</sequence>
<reference key="1">
    <citation type="journal article" date="2002" name="Nature">
        <title>Complete genome sequence of the model actinomycete Streptomyces coelicolor A3(2).</title>
        <authorList>
            <person name="Bentley S.D."/>
            <person name="Chater K.F."/>
            <person name="Cerdeno-Tarraga A.-M."/>
            <person name="Challis G.L."/>
            <person name="Thomson N.R."/>
            <person name="James K.D."/>
            <person name="Harris D.E."/>
            <person name="Quail M.A."/>
            <person name="Kieser H."/>
            <person name="Harper D."/>
            <person name="Bateman A."/>
            <person name="Brown S."/>
            <person name="Chandra G."/>
            <person name="Chen C.W."/>
            <person name="Collins M."/>
            <person name="Cronin A."/>
            <person name="Fraser A."/>
            <person name="Goble A."/>
            <person name="Hidalgo J."/>
            <person name="Hornsby T."/>
            <person name="Howarth S."/>
            <person name="Huang C.-H."/>
            <person name="Kieser T."/>
            <person name="Larke L."/>
            <person name="Murphy L.D."/>
            <person name="Oliver K."/>
            <person name="O'Neil S."/>
            <person name="Rabbinowitsch E."/>
            <person name="Rajandream M.A."/>
            <person name="Rutherford K.M."/>
            <person name="Rutter S."/>
            <person name="Seeger K."/>
            <person name="Saunders D."/>
            <person name="Sharp S."/>
            <person name="Squares R."/>
            <person name="Squares S."/>
            <person name="Taylor K."/>
            <person name="Warren T."/>
            <person name="Wietzorrek A."/>
            <person name="Woodward J.R."/>
            <person name="Barrell B.G."/>
            <person name="Parkhill J."/>
            <person name="Hopwood D.A."/>
        </authorList>
    </citation>
    <scope>NUCLEOTIDE SEQUENCE [LARGE SCALE GENOMIC DNA]</scope>
    <source>
        <strain>ATCC BAA-471 / A3(2) / M145</strain>
    </source>
</reference>
<dbReference type="EC" id="6.1.1.16" evidence="1"/>
<dbReference type="EMBL" id="AL939119">
    <property type="protein sequence ID" value="CAB77329.1"/>
    <property type="molecule type" value="Genomic_DNA"/>
</dbReference>
<dbReference type="RefSeq" id="NP_628409.1">
    <property type="nucleotide sequence ID" value="NC_003888.3"/>
</dbReference>
<dbReference type="SMR" id="Q9L0Q6"/>
<dbReference type="FunCoup" id="Q9L0Q6">
    <property type="interactions" value="347"/>
</dbReference>
<dbReference type="STRING" id="100226.gene:17761879"/>
<dbReference type="PaxDb" id="100226-SCO4235"/>
<dbReference type="KEGG" id="sco:SCO4235"/>
<dbReference type="PATRIC" id="fig|100226.15.peg.4297"/>
<dbReference type="eggNOG" id="COG0215">
    <property type="taxonomic scope" value="Bacteria"/>
</dbReference>
<dbReference type="HOGENOM" id="CLU_013528_0_1_11"/>
<dbReference type="InParanoid" id="Q9L0Q6"/>
<dbReference type="OrthoDB" id="9815130at2"/>
<dbReference type="PhylomeDB" id="Q9L0Q6"/>
<dbReference type="Proteomes" id="UP000001973">
    <property type="component" value="Chromosome"/>
</dbReference>
<dbReference type="GO" id="GO:0005737">
    <property type="term" value="C:cytoplasm"/>
    <property type="evidence" value="ECO:0000318"/>
    <property type="project" value="GO_Central"/>
</dbReference>
<dbReference type="GO" id="GO:0005829">
    <property type="term" value="C:cytosol"/>
    <property type="evidence" value="ECO:0000318"/>
    <property type="project" value="GO_Central"/>
</dbReference>
<dbReference type="GO" id="GO:0005524">
    <property type="term" value="F:ATP binding"/>
    <property type="evidence" value="ECO:0000318"/>
    <property type="project" value="GO_Central"/>
</dbReference>
<dbReference type="GO" id="GO:0004817">
    <property type="term" value="F:cysteine-tRNA ligase activity"/>
    <property type="evidence" value="ECO:0000318"/>
    <property type="project" value="GO_Central"/>
</dbReference>
<dbReference type="GO" id="GO:0008270">
    <property type="term" value="F:zinc ion binding"/>
    <property type="evidence" value="ECO:0007669"/>
    <property type="project" value="UniProtKB-UniRule"/>
</dbReference>
<dbReference type="GO" id="GO:0006423">
    <property type="term" value="P:cysteinyl-tRNA aminoacylation"/>
    <property type="evidence" value="ECO:0000318"/>
    <property type="project" value="GO_Central"/>
</dbReference>
<dbReference type="CDD" id="cd00672">
    <property type="entry name" value="CysRS_core"/>
    <property type="match status" value="1"/>
</dbReference>
<dbReference type="FunFam" id="3.40.50.620:FF:000068">
    <property type="entry name" value="Cysteine--tRNA ligase"/>
    <property type="match status" value="1"/>
</dbReference>
<dbReference type="Gene3D" id="1.20.120.1910">
    <property type="entry name" value="Cysteine-tRNA ligase, C-terminal anti-codon recognition domain"/>
    <property type="match status" value="1"/>
</dbReference>
<dbReference type="Gene3D" id="3.40.50.620">
    <property type="entry name" value="HUPs"/>
    <property type="match status" value="1"/>
</dbReference>
<dbReference type="HAMAP" id="MF_00041">
    <property type="entry name" value="Cys_tRNA_synth"/>
    <property type="match status" value="1"/>
</dbReference>
<dbReference type="InterPro" id="IPR015803">
    <property type="entry name" value="Cys-tRNA-ligase"/>
</dbReference>
<dbReference type="InterPro" id="IPR015273">
    <property type="entry name" value="Cys-tRNA-synt_Ia_DALR"/>
</dbReference>
<dbReference type="InterPro" id="IPR024909">
    <property type="entry name" value="Cys-tRNA/MSH_ligase"/>
</dbReference>
<dbReference type="InterPro" id="IPR056411">
    <property type="entry name" value="CysS_C"/>
</dbReference>
<dbReference type="InterPro" id="IPR014729">
    <property type="entry name" value="Rossmann-like_a/b/a_fold"/>
</dbReference>
<dbReference type="InterPro" id="IPR032678">
    <property type="entry name" value="tRNA-synt_1_cat_dom"/>
</dbReference>
<dbReference type="InterPro" id="IPR009080">
    <property type="entry name" value="tRNAsynth_Ia_anticodon-bd"/>
</dbReference>
<dbReference type="NCBIfam" id="TIGR00435">
    <property type="entry name" value="cysS"/>
    <property type="match status" value="1"/>
</dbReference>
<dbReference type="PANTHER" id="PTHR10890:SF30">
    <property type="entry name" value="CYSTEINE--TRNA LIGASE"/>
    <property type="match status" value="1"/>
</dbReference>
<dbReference type="PANTHER" id="PTHR10890">
    <property type="entry name" value="CYSTEINYL-TRNA SYNTHETASE"/>
    <property type="match status" value="1"/>
</dbReference>
<dbReference type="Pfam" id="PF23493">
    <property type="entry name" value="CysS_C"/>
    <property type="match status" value="1"/>
</dbReference>
<dbReference type="Pfam" id="PF09190">
    <property type="entry name" value="DALR_2"/>
    <property type="match status" value="1"/>
</dbReference>
<dbReference type="Pfam" id="PF01406">
    <property type="entry name" value="tRNA-synt_1e"/>
    <property type="match status" value="1"/>
</dbReference>
<dbReference type="PRINTS" id="PR00983">
    <property type="entry name" value="TRNASYNTHCYS"/>
</dbReference>
<dbReference type="SMART" id="SM00840">
    <property type="entry name" value="DALR_2"/>
    <property type="match status" value="1"/>
</dbReference>
<dbReference type="SUPFAM" id="SSF47323">
    <property type="entry name" value="Anticodon-binding domain of a subclass of class I aminoacyl-tRNA synthetases"/>
    <property type="match status" value="1"/>
</dbReference>
<dbReference type="SUPFAM" id="SSF52374">
    <property type="entry name" value="Nucleotidylyl transferase"/>
    <property type="match status" value="1"/>
</dbReference>
<evidence type="ECO:0000255" key="1">
    <source>
        <dbReference type="HAMAP-Rule" id="MF_00041"/>
    </source>
</evidence>
<evidence type="ECO:0000256" key="2">
    <source>
        <dbReference type="SAM" id="MobiDB-lite"/>
    </source>
</evidence>
<comment type="catalytic activity">
    <reaction evidence="1">
        <text>tRNA(Cys) + L-cysteine + ATP = L-cysteinyl-tRNA(Cys) + AMP + diphosphate</text>
        <dbReference type="Rhea" id="RHEA:17773"/>
        <dbReference type="Rhea" id="RHEA-COMP:9661"/>
        <dbReference type="Rhea" id="RHEA-COMP:9679"/>
        <dbReference type="ChEBI" id="CHEBI:30616"/>
        <dbReference type="ChEBI" id="CHEBI:33019"/>
        <dbReference type="ChEBI" id="CHEBI:35235"/>
        <dbReference type="ChEBI" id="CHEBI:78442"/>
        <dbReference type="ChEBI" id="CHEBI:78517"/>
        <dbReference type="ChEBI" id="CHEBI:456215"/>
        <dbReference type="EC" id="6.1.1.16"/>
    </reaction>
</comment>
<comment type="cofactor">
    <cofactor evidence="1">
        <name>Zn(2+)</name>
        <dbReference type="ChEBI" id="CHEBI:29105"/>
    </cofactor>
    <text evidence="1">Binds 1 zinc ion per subunit.</text>
</comment>
<comment type="subunit">
    <text evidence="1">Monomer.</text>
</comment>
<comment type="subcellular location">
    <subcellularLocation>
        <location evidence="1">Cytoplasm</location>
    </subcellularLocation>
</comment>
<comment type="similarity">
    <text evidence="1">Belongs to the class-I aminoacyl-tRNA synthetase family.</text>
</comment>